<organism>
    <name type="scientific">Xylella fastidiosa (strain 9a5c)</name>
    <dbReference type="NCBI Taxonomy" id="160492"/>
    <lineage>
        <taxon>Bacteria</taxon>
        <taxon>Pseudomonadati</taxon>
        <taxon>Pseudomonadota</taxon>
        <taxon>Gammaproteobacteria</taxon>
        <taxon>Lysobacterales</taxon>
        <taxon>Lysobacteraceae</taxon>
        <taxon>Xylella</taxon>
    </lineage>
</organism>
<keyword id="KW-0143">Chaperone</keyword>
<keyword id="KW-0963">Cytoplasm</keyword>
<keyword id="KW-0653">Protein transport</keyword>
<keyword id="KW-0811">Translocation</keyword>
<keyword id="KW-0813">Transport</keyword>
<name>SECB_XYLFA</name>
<dbReference type="EMBL" id="AE003849">
    <property type="protein sequence ID" value="AAF84609.1"/>
    <property type="status" value="ALT_INIT"/>
    <property type="molecule type" value="Genomic_DNA"/>
</dbReference>
<dbReference type="PIR" id="G82637">
    <property type="entry name" value="G82637"/>
</dbReference>
<dbReference type="RefSeq" id="WP_010894270.1">
    <property type="nucleotide sequence ID" value="NC_002488.3"/>
</dbReference>
<dbReference type="SMR" id="Q9PCH8"/>
<dbReference type="STRING" id="160492.XF_1801"/>
<dbReference type="KEGG" id="xfa:XF_1801"/>
<dbReference type="eggNOG" id="COG1952">
    <property type="taxonomic scope" value="Bacteria"/>
</dbReference>
<dbReference type="HOGENOM" id="CLU_111574_1_0_6"/>
<dbReference type="Proteomes" id="UP000000812">
    <property type="component" value="Chromosome"/>
</dbReference>
<dbReference type="GO" id="GO:0005737">
    <property type="term" value="C:cytoplasm"/>
    <property type="evidence" value="ECO:0007669"/>
    <property type="project" value="UniProtKB-SubCell"/>
</dbReference>
<dbReference type="GO" id="GO:0051082">
    <property type="term" value="F:unfolded protein binding"/>
    <property type="evidence" value="ECO:0007669"/>
    <property type="project" value="InterPro"/>
</dbReference>
<dbReference type="GO" id="GO:0006457">
    <property type="term" value="P:protein folding"/>
    <property type="evidence" value="ECO:0007669"/>
    <property type="project" value="UniProtKB-UniRule"/>
</dbReference>
<dbReference type="GO" id="GO:0051262">
    <property type="term" value="P:protein tetramerization"/>
    <property type="evidence" value="ECO:0007669"/>
    <property type="project" value="InterPro"/>
</dbReference>
<dbReference type="GO" id="GO:0015031">
    <property type="term" value="P:protein transport"/>
    <property type="evidence" value="ECO:0007669"/>
    <property type="project" value="UniProtKB-UniRule"/>
</dbReference>
<dbReference type="Gene3D" id="3.10.420.10">
    <property type="entry name" value="SecB-like"/>
    <property type="match status" value="1"/>
</dbReference>
<dbReference type="HAMAP" id="MF_00821">
    <property type="entry name" value="SecB"/>
    <property type="match status" value="1"/>
</dbReference>
<dbReference type="InterPro" id="IPR003708">
    <property type="entry name" value="SecB"/>
</dbReference>
<dbReference type="InterPro" id="IPR035958">
    <property type="entry name" value="SecB-like_sf"/>
</dbReference>
<dbReference type="NCBIfam" id="NF004391">
    <property type="entry name" value="PRK05751.1-2"/>
    <property type="match status" value="1"/>
</dbReference>
<dbReference type="NCBIfam" id="NF004393">
    <property type="entry name" value="PRK05751.1-4"/>
    <property type="match status" value="1"/>
</dbReference>
<dbReference type="NCBIfam" id="TIGR00809">
    <property type="entry name" value="secB"/>
    <property type="match status" value="1"/>
</dbReference>
<dbReference type="PANTHER" id="PTHR36918">
    <property type="match status" value="1"/>
</dbReference>
<dbReference type="PANTHER" id="PTHR36918:SF1">
    <property type="entry name" value="PROTEIN-EXPORT PROTEIN SECB"/>
    <property type="match status" value="1"/>
</dbReference>
<dbReference type="Pfam" id="PF02556">
    <property type="entry name" value="SecB"/>
    <property type="match status" value="1"/>
</dbReference>
<dbReference type="PRINTS" id="PR01594">
    <property type="entry name" value="SECBCHAPRONE"/>
</dbReference>
<dbReference type="SUPFAM" id="SSF54611">
    <property type="entry name" value="SecB-like"/>
    <property type="match status" value="1"/>
</dbReference>
<proteinExistence type="inferred from homology"/>
<evidence type="ECO:0000255" key="1">
    <source>
        <dbReference type="HAMAP-Rule" id="MF_00821"/>
    </source>
</evidence>
<evidence type="ECO:0000305" key="2"/>
<protein>
    <recommendedName>
        <fullName evidence="1">Protein-export protein SecB</fullName>
    </recommendedName>
</protein>
<feature type="chain" id="PRO_0000055431" description="Protein-export protein SecB">
    <location>
        <begin position="1"/>
        <end position="172"/>
    </location>
</feature>
<reference key="1">
    <citation type="journal article" date="2000" name="Nature">
        <title>The genome sequence of the plant pathogen Xylella fastidiosa.</title>
        <authorList>
            <person name="Simpson A.J.G."/>
            <person name="Reinach F.C."/>
            <person name="Arruda P."/>
            <person name="Abreu F.A."/>
            <person name="Acencio M."/>
            <person name="Alvarenga R."/>
            <person name="Alves L.M.C."/>
            <person name="Araya J.E."/>
            <person name="Baia G.S."/>
            <person name="Baptista C.S."/>
            <person name="Barros M.H."/>
            <person name="Bonaccorsi E.D."/>
            <person name="Bordin S."/>
            <person name="Bove J.M."/>
            <person name="Briones M.R.S."/>
            <person name="Bueno M.R.P."/>
            <person name="Camargo A.A."/>
            <person name="Camargo L.E.A."/>
            <person name="Carraro D.M."/>
            <person name="Carrer H."/>
            <person name="Colauto N.B."/>
            <person name="Colombo C."/>
            <person name="Costa F.F."/>
            <person name="Costa M.C.R."/>
            <person name="Costa-Neto C.M."/>
            <person name="Coutinho L.L."/>
            <person name="Cristofani M."/>
            <person name="Dias-Neto E."/>
            <person name="Docena C."/>
            <person name="El-Dorry H."/>
            <person name="Facincani A.P."/>
            <person name="Ferreira A.J.S."/>
            <person name="Ferreira V.C.A."/>
            <person name="Ferro J.A."/>
            <person name="Fraga J.S."/>
            <person name="Franca S.C."/>
            <person name="Franco M.C."/>
            <person name="Frohme M."/>
            <person name="Furlan L.R."/>
            <person name="Garnier M."/>
            <person name="Goldman G.H."/>
            <person name="Goldman M.H.S."/>
            <person name="Gomes S.L."/>
            <person name="Gruber A."/>
            <person name="Ho P.L."/>
            <person name="Hoheisel J.D."/>
            <person name="Junqueira M.L."/>
            <person name="Kemper E.L."/>
            <person name="Kitajima J.P."/>
            <person name="Krieger J.E."/>
            <person name="Kuramae E.E."/>
            <person name="Laigret F."/>
            <person name="Lambais M.R."/>
            <person name="Leite L.C.C."/>
            <person name="Lemos E.G.M."/>
            <person name="Lemos M.V.F."/>
            <person name="Lopes S.A."/>
            <person name="Lopes C.R."/>
            <person name="Machado J.A."/>
            <person name="Machado M.A."/>
            <person name="Madeira A.M.B.N."/>
            <person name="Madeira H.M.F."/>
            <person name="Marino C.L."/>
            <person name="Marques M.V."/>
            <person name="Martins E.A.L."/>
            <person name="Martins E.M.F."/>
            <person name="Matsukuma A.Y."/>
            <person name="Menck C.F.M."/>
            <person name="Miracca E.C."/>
            <person name="Miyaki C.Y."/>
            <person name="Monteiro-Vitorello C.B."/>
            <person name="Moon D.H."/>
            <person name="Nagai M.A."/>
            <person name="Nascimento A.L.T.O."/>
            <person name="Netto L.E.S."/>
            <person name="Nhani A. Jr."/>
            <person name="Nobrega F.G."/>
            <person name="Nunes L.R."/>
            <person name="Oliveira M.A."/>
            <person name="de Oliveira M.C."/>
            <person name="de Oliveira R.C."/>
            <person name="Palmieri D.A."/>
            <person name="Paris A."/>
            <person name="Peixoto B.R."/>
            <person name="Pereira G.A.G."/>
            <person name="Pereira H.A. Jr."/>
            <person name="Pesquero J.B."/>
            <person name="Quaggio R.B."/>
            <person name="Roberto P.G."/>
            <person name="Rodrigues V."/>
            <person name="de Rosa A.J.M."/>
            <person name="de Rosa V.E. Jr."/>
            <person name="de Sa R.G."/>
            <person name="Santelli R.V."/>
            <person name="Sawasaki H.E."/>
            <person name="da Silva A.C.R."/>
            <person name="da Silva A.M."/>
            <person name="da Silva F.R."/>
            <person name="Silva W.A. Jr."/>
            <person name="da Silveira J.F."/>
            <person name="Silvestri M.L.Z."/>
            <person name="Siqueira W.J."/>
            <person name="de Souza A.A."/>
            <person name="de Souza A.P."/>
            <person name="Terenzi M.F."/>
            <person name="Truffi D."/>
            <person name="Tsai S.M."/>
            <person name="Tsuhako M.H."/>
            <person name="Vallada H."/>
            <person name="Van Sluys M.A."/>
            <person name="Verjovski-Almeida S."/>
            <person name="Vettore A.L."/>
            <person name="Zago M.A."/>
            <person name="Zatz M."/>
            <person name="Meidanis J."/>
            <person name="Setubal J.C."/>
        </authorList>
    </citation>
    <scope>NUCLEOTIDE SEQUENCE [LARGE SCALE GENOMIC DNA]</scope>
    <source>
        <strain>9a5c</strain>
    </source>
</reference>
<sequence>MSDEITNGAAKPTEAISGPTFTIEKIYIKDVSFEAPNSPAVFNEAGQPELQLNLNQRVQRLNENAFELVLHVTLTCTAAGKTAYVVEVQQAGVFGLFGLDQHAIGVLLGTQCPNILFPYVRSLVSDLIQIGGFPPFYLQPINFDALYAETLRQRAQNEKEGSQISSHPAGNA</sequence>
<comment type="function">
    <text evidence="1">One of the proteins required for the normal export of preproteins out of the cell cytoplasm. It is a molecular chaperone that binds to a subset of precursor proteins, maintaining them in a translocation-competent state. It also specifically binds to its receptor SecA.</text>
</comment>
<comment type="subunit">
    <text evidence="1">Homotetramer, a dimer of dimers. One homotetramer interacts with 1 SecA dimer.</text>
</comment>
<comment type="subcellular location">
    <subcellularLocation>
        <location evidence="1">Cytoplasm</location>
    </subcellularLocation>
</comment>
<comment type="similarity">
    <text evidence="1">Belongs to the SecB family.</text>
</comment>
<comment type="sequence caution" evidence="2">
    <conflict type="erroneous initiation">
        <sequence resource="EMBL-CDS" id="AAF84609"/>
    </conflict>
</comment>
<gene>
    <name evidence="1" type="primary">secB</name>
    <name type="ordered locus">XF_1801</name>
</gene>
<accession>Q9PCH8</accession>